<name>APHA_SALTY</name>
<comment type="function">
    <text evidence="3 4">Dephosphorylates several organic phosphate monoesters such as 3'-UMP, 5'-UMP and pNPP (PubMed:6256351). Also has a phosphotransferase activity catalyzing the transfer of low-energy phosphate groups from organic phosphate monoesters to free hydroxyl groups of various organic compounds such as the 2'-, 3-, or 5'-hydroxyls of nucleosides and nucleotides (PubMed:3049613). Also displays significant phosphomutase activity since it is able to catalyze the transfer of the phosphate group of 3'-AMP from the 3'-position both to the 2'- and 5'-positions. One of the physiological functions of the phosphohydrolytic activity of the enzyme is believed to be the scavenging of organic phosphate esters that otherwise cannot pass the cytoplasmic membrane (PubMed:6256351).</text>
</comment>
<comment type="catalytic activity">
    <reaction evidence="3 4">
        <text>a phosphate monoester + H2O = an alcohol + phosphate</text>
        <dbReference type="Rhea" id="RHEA:15017"/>
        <dbReference type="ChEBI" id="CHEBI:15377"/>
        <dbReference type="ChEBI" id="CHEBI:30879"/>
        <dbReference type="ChEBI" id="CHEBI:43474"/>
        <dbReference type="ChEBI" id="CHEBI:67140"/>
        <dbReference type="EC" id="3.1.3.2"/>
    </reaction>
</comment>
<comment type="cofactor">
    <cofactor evidence="1">
        <name>Mg(2+)</name>
        <dbReference type="ChEBI" id="CHEBI:18420"/>
    </cofactor>
    <text evidence="1">Binds 1 Mg(2+) ion per subunit.</text>
</comment>
<comment type="activity regulation">
    <text evidence="3 4">Nucleosides, and particularly 2'-deoxyribonucleosides, are potent inhibitors of the phosphatase activity. The phosphatase activity is also inhibited by inorganic phosphate and EDTA in vitro.</text>
</comment>
<comment type="biophysicochemical properties">
    <kinetics>
        <KM evidence="4">0.3 mM for 5'-UMP (at 37 degrees Celsius and pH 6.5)</KM>
    </kinetics>
    <phDependence>
        <text evidence="4">Optimum pH is 5.0-5.5 and 6.5 for the phosphatase activity with 3'-UMP and 5'-UMP as substrate, respectively.</text>
    </phDependence>
</comment>
<comment type="subunit">
    <text evidence="3">Homotetramer.</text>
</comment>
<comment type="subcellular location">
    <subcellularLocation>
        <location evidence="4">Periplasm</location>
    </subcellularLocation>
</comment>
<comment type="disruption phenotype">
    <text evidence="4">Cells lacking this gene show a severely decreased growth rate on 5'-UMP as pyrimidine source.</text>
</comment>
<comment type="similarity">
    <text evidence="5">Belongs to the class B bacterial acid phosphatase family.</text>
</comment>
<sequence>MKKITLALSAVCLLFTLNHSANALVSSPSTLNPGTNVAKLAEQAPVHWVSVAQIENSLTGRPPMAVGFDIDDTVLFSSPGFWRGKKTYSPDSDDYLKNPAFWEKMNNGWDEFSIPKEVARQLIDMHVRRGDSIYFVTGRSQTKTETVSKTLADNFHIPAANMNPVIFAGDKPEQNTKVQWLQEKNMRIFYGDSDNDITAARDCGIRGIRILRAANSTYKPLPQAGAFGEEVIVNSEY</sequence>
<accession>P58683</accession>
<proteinExistence type="evidence at protein level"/>
<protein>
    <recommendedName>
        <fullName>Class B acid phosphatase</fullName>
        <shortName>CBAP</shortName>
        <ecNumber evidence="3 4">3.1.3.2</ecNumber>
    </recommendedName>
    <alternativeName>
        <fullName>Non-specific acid phosphatase II</fullName>
    </alternativeName>
</protein>
<feature type="signal peptide" evidence="2">
    <location>
        <begin position="1"/>
        <end position="23"/>
    </location>
</feature>
<feature type="chain" id="PRO_0000024009" description="Class B acid phosphatase">
    <location>
        <begin position="24"/>
        <end position="237"/>
    </location>
</feature>
<feature type="active site" description="Nucleophile" evidence="1">
    <location>
        <position position="69"/>
    </location>
</feature>
<feature type="active site" description="Proton donor" evidence="1">
    <location>
        <position position="71"/>
    </location>
</feature>
<feature type="binding site" evidence="1">
    <location>
        <position position="69"/>
    </location>
    <ligand>
        <name>Mg(2+)</name>
        <dbReference type="ChEBI" id="CHEBI:18420"/>
    </ligand>
</feature>
<feature type="binding site" evidence="1">
    <location>
        <position position="71"/>
    </location>
    <ligand>
        <name>Mg(2+)</name>
        <dbReference type="ChEBI" id="CHEBI:18420"/>
    </ligand>
</feature>
<feature type="binding site" evidence="1">
    <location>
        <begin position="137"/>
        <end position="138"/>
    </location>
    <ligand>
        <name>substrate</name>
    </ligand>
</feature>
<feature type="binding site" evidence="1">
    <location>
        <position position="177"/>
    </location>
    <ligand>
        <name>substrate</name>
    </ligand>
</feature>
<feature type="binding site" evidence="1">
    <location>
        <position position="192"/>
    </location>
    <ligand>
        <name>Mg(2+)</name>
        <dbReference type="ChEBI" id="CHEBI:18420"/>
    </ligand>
</feature>
<reference key="1">
    <citation type="journal article" date="2001" name="Nature">
        <title>Complete genome sequence of Salmonella enterica serovar Typhimurium LT2.</title>
        <authorList>
            <person name="McClelland M."/>
            <person name="Sanderson K.E."/>
            <person name="Spieth J."/>
            <person name="Clifton S.W."/>
            <person name="Latreille P."/>
            <person name="Courtney L."/>
            <person name="Porwollik S."/>
            <person name="Ali J."/>
            <person name="Dante M."/>
            <person name="Du F."/>
            <person name="Hou S."/>
            <person name="Layman D."/>
            <person name="Leonard S."/>
            <person name="Nguyen C."/>
            <person name="Scott K."/>
            <person name="Holmes A."/>
            <person name="Grewal N."/>
            <person name="Mulvaney E."/>
            <person name="Ryan E."/>
            <person name="Sun H."/>
            <person name="Florea L."/>
            <person name="Miller W."/>
            <person name="Stoneking T."/>
            <person name="Nhan M."/>
            <person name="Waterston R."/>
            <person name="Wilson R.K."/>
        </authorList>
    </citation>
    <scope>NUCLEOTIDE SEQUENCE [LARGE SCALE GENOMIC DNA]</scope>
    <source>
        <strain>LT2 / SGSC1412 / ATCC 700720</strain>
    </source>
</reference>
<reference key="2">
    <citation type="journal article" date="1981" name="J. Biol. Chem.">
        <title>Periplasmic phosphatases in Salmonella typhimurium LT2. A biochemical, physiological, and partial genetic analysis of three nucleoside monophosphate dephosphorylating enzymes.</title>
        <authorList>
            <person name="Uerkvitz W."/>
            <person name="Beck C.F."/>
        </authorList>
    </citation>
    <scope>FUNCTION AS A PHOSPHATASE</scope>
    <scope>CATALYTIC ACTIVITY</scope>
    <scope>SUBSTRATE SPECIFICITY</scope>
    <scope>BIOPHYSICOCHEMICAL PROPERTIES</scope>
    <scope>ACTIVITY REGULATION</scope>
    <scope>SUBCELLULAR LOCATION</scope>
    <scope>DISRUPTION PHENOTYPE</scope>
    <source>
        <strain>LT2</strain>
    </source>
</reference>
<reference key="3">
    <citation type="journal article" date="1988" name="J. Biol. Chem.">
        <title>Periplasmic nonspecific acid phosphatase II from Salmonella typhimurium LT2. Crystallization, detergent reactivation, and phosphotransferase activity.</title>
        <authorList>
            <person name="Uerkvitz W."/>
        </authorList>
    </citation>
    <scope>FUNCTION AS A PHOSPHOTRANSFERASE</scope>
    <scope>CATALYTIC ACTIVITY</scope>
    <scope>SUBSTRATE SPECIFICITY</scope>
    <scope>ACTIVITY REGULATION</scope>
    <scope>SUBUNIT</scope>
    <scope>CRYSTALLIZATION</scope>
    <source>
        <strain>LT2</strain>
    </source>
</reference>
<gene>
    <name type="primary">aphA</name>
    <name type="ordered locus">STM4249</name>
</gene>
<organism>
    <name type="scientific">Salmonella typhimurium (strain LT2 / SGSC1412 / ATCC 700720)</name>
    <dbReference type="NCBI Taxonomy" id="99287"/>
    <lineage>
        <taxon>Bacteria</taxon>
        <taxon>Pseudomonadati</taxon>
        <taxon>Pseudomonadota</taxon>
        <taxon>Gammaproteobacteria</taxon>
        <taxon>Enterobacterales</taxon>
        <taxon>Enterobacteriaceae</taxon>
        <taxon>Salmonella</taxon>
    </lineage>
</organism>
<evidence type="ECO:0000250" key="1">
    <source>
        <dbReference type="UniProtKB" id="Q540U1"/>
    </source>
</evidence>
<evidence type="ECO:0000255" key="2"/>
<evidence type="ECO:0000269" key="3">
    <source>
    </source>
</evidence>
<evidence type="ECO:0000269" key="4">
    <source>
    </source>
</evidence>
<evidence type="ECO:0000305" key="5"/>
<dbReference type="EC" id="3.1.3.2" evidence="3 4"/>
<dbReference type="EMBL" id="AE006468">
    <property type="protein sequence ID" value="AAL23073.1"/>
    <property type="molecule type" value="Genomic_DNA"/>
</dbReference>
<dbReference type="RefSeq" id="NP_463114.1">
    <property type="nucleotide sequence ID" value="NC_003197.2"/>
</dbReference>
<dbReference type="RefSeq" id="WP_000724435.1">
    <property type="nucleotide sequence ID" value="NC_003197.2"/>
</dbReference>
<dbReference type="SMR" id="P58683"/>
<dbReference type="STRING" id="99287.STM4249"/>
<dbReference type="PaxDb" id="99287-STM4249"/>
<dbReference type="GeneID" id="1255775"/>
<dbReference type="KEGG" id="stm:STM4249"/>
<dbReference type="PATRIC" id="fig|99287.12.peg.4469"/>
<dbReference type="HOGENOM" id="CLU_081496_0_0_6"/>
<dbReference type="OMA" id="PEFWEKM"/>
<dbReference type="PhylomeDB" id="P58683"/>
<dbReference type="BioCyc" id="SENT99287:STM4249-MONOMER"/>
<dbReference type="SABIO-RK" id="P58683"/>
<dbReference type="Proteomes" id="UP000001014">
    <property type="component" value="Chromosome"/>
</dbReference>
<dbReference type="GO" id="GO:0030288">
    <property type="term" value="C:outer membrane-bounded periplasmic space"/>
    <property type="evidence" value="ECO:0007669"/>
    <property type="project" value="InterPro"/>
</dbReference>
<dbReference type="GO" id="GO:0003993">
    <property type="term" value="F:acid phosphatase activity"/>
    <property type="evidence" value="ECO:0007669"/>
    <property type="project" value="UniProtKB-EC"/>
</dbReference>
<dbReference type="GO" id="GO:0046872">
    <property type="term" value="F:metal ion binding"/>
    <property type="evidence" value="ECO:0007669"/>
    <property type="project" value="UniProtKB-KW"/>
</dbReference>
<dbReference type="CDD" id="cd07499">
    <property type="entry name" value="HAD_CBAP"/>
    <property type="match status" value="1"/>
</dbReference>
<dbReference type="FunFam" id="3.40.50.1000:FF:000049">
    <property type="entry name" value="Class B acid phosphatase"/>
    <property type="match status" value="1"/>
</dbReference>
<dbReference type="Gene3D" id="3.40.50.1000">
    <property type="entry name" value="HAD superfamily/HAD-like"/>
    <property type="match status" value="1"/>
</dbReference>
<dbReference type="InterPro" id="IPR005519">
    <property type="entry name" value="Acid_phosphat_B-like"/>
</dbReference>
<dbReference type="InterPro" id="IPR036412">
    <property type="entry name" value="HAD-like_sf"/>
</dbReference>
<dbReference type="InterPro" id="IPR010025">
    <property type="entry name" value="HAD-SF_ppase_IIIB_AphA"/>
</dbReference>
<dbReference type="InterPro" id="IPR023214">
    <property type="entry name" value="HAD_sf"/>
</dbReference>
<dbReference type="NCBIfam" id="TIGR01672">
    <property type="entry name" value="AphA"/>
    <property type="match status" value="1"/>
</dbReference>
<dbReference type="Pfam" id="PF03767">
    <property type="entry name" value="Acid_phosphat_B"/>
    <property type="match status" value="1"/>
</dbReference>
<dbReference type="PIRSF" id="PIRSF017818">
    <property type="entry name" value="Acid_Ptase_B"/>
    <property type="match status" value="1"/>
</dbReference>
<dbReference type="SFLD" id="SFLDG01127">
    <property type="entry name" value="C1.3:_Acid_Phosphatase_Like"/>
    <property type="match status" value="1"/>
</dbReference>
<dbReference type="SFLD" id="SFLDS00003">
    <property type="entry name" value="Haloacid_Dehalogenase"/>
    <property type="match status" value="1"/>
</dbReference>
<dbReference type="SUPFAM" id="SSF56784">
    <property type="entry name" value="HAD-like"/>
    <property type="match status" value="1"/>
</dbReference>
<keyword id="KW-0378">Hydrolase</keyword>
<keyword id="KW-0460">Magnesium</keyword>
<keyword id="KW-0479">Metal-binding</keyword>
<keyword id="KW-0574">Periplasm</keyword>
<keyword id="KW-1185">Reference proteome</keyword>
<keyword id="KW-0732">Signal</keyword>